<proteinExistence type="inferred from homology"/>
<feature type="signal peptide" evidence="2">
    <location>
        <begin position="1"/>
        <end position="26"/>
    </location>
</feature>
<feature type="chain" id="PRO_0000003927" description="Protocadherin beta-7">
    <location>
        <begin position="27"/>
        <end position="793"/>
    </location>
</feature>
<feature type="topological domain" description="Extracellular" evidence="2">
    <location>
        <begin position="27"/>
        <end position="688"/>
    </location>
</feature>
<feature type="transmembrane region" description="Helical" evidence="2">
    <location>
        <begin position="689"/>
        <end position="709"/>
    </location>
</feature>
<feature type="topological domain" description="Cytoplasmic" evidence="2">
    <location>
        <begin position="710"/>
        <end position="793"/>
    </location>
</feature>
<feature type="domain" description="Cadherin 1" evidence="3">
    <location>
        <begin position="35"/>
        <end position="133"/>
    </location>
</feature>
<feature type="domain" description="Cadherin 2" evidence="3">
    <location>
        <begin position="138"/>
        <end position="242"/>
    </location>
</feature>
<feature type="domain" description="Cadherin 3" evidence="3">
    <location>
        <begin position="247"/>
        <end position="347"/>
    </location>
</feature>
<feature type="domain" description="Cadherin 4" evidence="3">
    <location>
        <begin position="352"/>
        <end position="451"/>
    </location>
</feature>
<feature type="domain" description="Cadherin 5" evidence="3">
    <location>
        <begin position="456"/>
        <end position="561"/>
    </location>
</feature>
<feature type="domain" description="Cadherin 6" evidence="3">
    <location>
        <begin position="568"/>
        <end position="671"/>
    </location>
</feature>
<feature type="glycosylation site" description="N-linked (GlcNAc...) asparagine" evidence="2">
    <location>
        <position position="169"/>
    </location>
</feature>
<feature type="glycosylation site" description="N-linked (GlcNAc...) asparagine" evidence="2">
    <location>
        <position position="418"/>
    </location>
</feature>
<feature type="glycosylation site" description="N-linked (GlcNAc...) asparagine" evidence="2">
    <location>
        <position position="436"/>
    </location>
</feature>
<feature type="glycosylation site" description="N-linked (GlcNAc...) asparagine" evidence="2">
    <location>
        <position position="567"/>
    </location>
</feature>
<keyword id="KW-0106">Calcium</keyword>
<keyword id="KW-0130">Cell adhesion</keyword>
<keyword id="KW-1003">Cell membrane</keyword>
<keyword id="KW-0325">Glycoprotein</keyword>
<keyword id="KW-0472">Membrane</keyword>
<keyword id="KW-1185">Reference proteome</keyword>
<keyword id="KW-0677">Repeat</keyword>
<keyword id="KW-0732">Signal</keyword>
<keyword id="KW-0812">Transmembrane</keyword>
<keyword id="KW-1133">Transmembrane helix</keyword>
<evidence type="ECO:0000250" key="1"/>
<evidence type="ECO:0000255" key="2"/>
<evidence type="ECO:0000255" key="3">
    <source>
        <dbReference type="PROSITE-ProRule" id="PRU00043"/>
    </source>
</evidence>
<comment type="function">
    <text>Potential calcium-dependent cell-adhesion protein. May be involved in the establishment and maintenance of specific neuronal connections in the brain.</text>
</comment>
<comment type="subcellular location">
    <subcellularLocation>
        <location evidence="1">Cell membrane</location>
        <topology evidence="1">Single-pass type I membrane protein</topology>
    </subcellularLocation>
</comment>
<gene>
    <name type="primary">PCDHB7</name>
</gene>
<organism>
    <name type="scientific">Pan troglodytes</name>
    <name type="common">Chimpanzee</name>
    <dbReference type="NCBI Taxonomy" id="9598"/>
    <lineage>
        <taxon>Eukaryota</taxon>
        <taxon>Metazoa</taxon>
        <taxon>Chordata</taxon>
        <taxon>Craniata</taxon>
        <taxon>Vertebrata</taxon>
        <taxon>Euteleostomi</taxon>
        <taxon>Mammalia</taxon>
        <taxon>Eutheria</taxon>
        <taxon>Euarchontoglires</taxon>
        <taxon>Primates</taxon>
        <taxon>Haplorrhini</taxon>
        <taxon>Catarrhini</taxon>
        <taxon>Hominidae</taxon>
        <taxon>Pan</taxon>
    </lineage>
</organism>
<accession>Q5DRC7</accession>
<dbReference type="SMR" id="Q5DRC7"/>
<dbReference type="FunCoup" id="Q5DRC7">
    <property type="interactions" value="37"/>
</dbReference>
<dbReference type="STRING" id="9598.ENSPTRP00000088113"/>
<dbReference type="GlyCosmos" id="Q5DRC7">
    <property type="glycosylation" value="4 sites, No reported glycans"/>
</dbReference>
<dbReference type="PaxDb" id="9598-ENSPTRP00000047957"/>
<dbReference type="eggNOG" id="KOG3594">
    <property type="taxonomic scope" value="Eukaryota"/>
</dbReference>
<dbReference type="InParanoid" id="Q5DRC7"/>
<dbReference type="Proteomes" id="UP000002277">
    <property type="component" value="Unplaced"/>
</dbReference>
<dbReference type="GO" id="GO:0005886">
    <property type="term" value="C:plasma membrane"/>
    <property type="evidence" value="ECO:0000318"/>
    <property type="project" value="GO_Central"/>
</dbReference>
<dbReference type="GO" id="GO:0005509">
    <property type="term" value="F:calcium ion binding"/>
    <property type="evidence" value="ECO:0007669"/>
    <property type="project" value="InterPro"/>
</dbReference>
<dbReference type="GO" id="GO:0007155">
    <property type="term" value="P:cell adhesion"/>
    <property type="evidence" value="ECO:0000318"/>
    <property type="project" value="GO_Central"/>
</dbReference>
<dbReference type="GO" id="GO:0007156">
    <property type="term" value="P:homophilic cell adhesion via plasma membrane adhesion molecules"/>
    <property type="evidence" value="ECO:0007669"/>
    <property type="project" value="InterPro"/>
</dbReference>
<dbReference type="GO" id="GO:0007399">
    <property type="term" value="P:nervous system development"/>
    <property type="evidence" value="ECO:0007669"/>
    <property type="project" value="UniProtKB-ARBA"/>
</dbReference>
<dbReference type="CDD" id="cd11304">
    <property type="entry name" value="Cadherin_repeat"/>
    <property type="match status" value="5"/>
</dbReference>
<dbReference type="FunFam" id="2.60.40.60:FF:000001">
    <property type="entry name" value="Protocadherin alpha 2"/>
    <property type="match status" value="1"/>
</dbReference>
<dbReference type="FunFam" id="2.60.40.60:FF:000002">
    <property type="entry name" value="Protocadherin alpha 2"/>
    <property type="match status" value="1"/>
</dbReference>
<dbReference type="FunFam" id="2.60.40.60:FF:000006">
    <property type="entry name" value="Protocadherin alpha 2"/>
    <property type="match status" value="1"/>
</dbReference>
<dbReference type="FunFam" id="2.60.40.60:FF:000046">
    <property type="entry name" value="Protocadherin beta 5"/>
    <property type="match status" value="1"/>
</dbReference>
<dbReference type="FunFam" id="2.60.40.60:FF:000309">
    <property type="entry name" value="Protocadherin beta-8"/>
    <property type="match status" value="1"/>
</dbReference>
<dbReference type="FunFam" id="2.60.40.60:FF:000018">
    <property type="entry name" value="Protocadherin gamma c3"/>
    <property type="match status" value="1"/>
</dbReference>
<dbReference type="Gene3D" id="2.60.40.60">
    <property type="entry name" value="Cadherins"/>
    <property type="match status" value="6"/>
</dbReference>
<dbReference type="InterPro" id="IPR002126">
    <property type="entry name" value="Cadherin-like_dom"/>
</dbReference>
<dbReference type="InterPro" id="IPR015919">
    <property type="entry name" value="Cadherin-like_sf"/>
</dbReference>
<dbReference type="InterPro" id="IPR032455">
    <property type="entry name" value="Cadherin_C"/>
</dbReference>
<dbReference type="InterPro" id="IPR020894">
    <property type="entry name" value="Cadherin_CS"/>
</dbReference>
<dbReference type="InterPro" id="IPR013164">
    <property type="entry name" value="Cadherin_N"/>
</dbReference>
<dbReference type="InterPro" id="IPR050174">
    <property type="entry name" value="Protocadherin/Cadherin-CA"/>
</dbReference>
<dbReference type="PANTHER" id="PTHR24028">
    <property type="entry name" value="CADHERIN-87A"/>
    <property type="match status" value="1"/>
</dbReference>
<dbReference type="PANTHER" id="PTHR24028:SF69">
    <property type="entry name" value="PROTOCADHERIN BETA-7"/>
    <property type="match status" value="1"/>
</dbReference>
<dbReference type="Pfam" id="PF00028">
    <property type="entry name" value="Cadherin"/>
    <property type="match status" value="5"/>
</dbReference>
<dbReference type="Pfam" id="PF08266">
    <property type="entry name" value="Cadherin_2"/>
    <property type="match status" value="1"/>
</dbReference>
<dbReference type="Pfam" id="PF16492">
    <property type="entry name" value="Cadherin_C_2"/>
    <property type="match status" value="1"/>
</dbReference>
<dbReference type="PRINTS" id="PR00205">
    <property type="entry name" value="CADHERIN"/>
</dbReference>
<dbReference type="SMART" id="SM00112">
    <property type="entry name" value="CA"/>
    <property type="match status" value="5"/>
</dbReference>
<dbReference type="SUPFAM" id="SSF49313">
    <property type="entry name" value="Cadherin-like"/>
    <property type="match status" value="6"/>
</dbReference>
<dbReference type="PROSITE" id="PS00232">
    <property type="entry name" value="CADHERIN_1"/>
    <property type="match status" value="5"/>
</dbReference>
<dbReference type="PROSITE" id="PS50268">
    <property type="entry name" value="CADHERIN_2"/>
    <property type="match status" value="5"/>
</dbReference>
<sequence>MEARVERAVQKRQVLFLCVFLGMSWAGAEPLRYFVAEETERGTFLTNLAKDLGLGVGELRARGTRIVSDQNMQILLLSSLTGDLLLNEKLDREELCGPREPCVLPFQLLLEKPFQIFRAELWVRDINDHAPVFLDREISLKILESTTPGAAFLLESAQDSDVGTNSLSNYTISPNAYFHINVHDSGEGNIYPELVLNQVLDREEIPEFSLTLTALDGGSPPRSGTALVRILVLDVNDNAPDFVRSLYKVQVPENSPVGSMVVSVSARDLDTGSNGEIAYAFSYATERILKTFQINPTSGNLHLKAQLDYEAIQTYTLTIQAKDGGGLSGKCTVVVDVTDINDNRPELLLSSLTSPIAENSPETVVAVFRIRDRDSGNNGKTVCSIQDDLPFILKPSVENFYTLVSEKPLDRERNTEYNITITVTDLGTPRLKTEHNITVLVSDVNDNAPAFTQTSYTLFVRENNSPALPIGSVSATDRDSGTNAQVIYSLLPSQDPHLPLSSLVSINADNGHLFALRSLDYEALQAFEFRVGATDRSSPALSSEALVHVLVLDANDNSPFVLYPLQNSSAPCTEPLPRAAEPGYLVTKVVAVDGDSGQNAWLSYQLLKATEPGLFGVWAHNGEVRTARLLSERDAAKQRLVVLVKDNGEPPRSATATLHVLLVDGFSQPYLRLPEAAPDQANLLTVYLVVALASVSSLFLLSVLLFVAVRLCRRSRAAPVGRCSVPEGPFPRHLVDLSGTGTLSQSYQYEVCLTGGSGTNEFKFLKPIIPNLLPQSTGREVEENRPFQNNLGF</sequence>
<reference key="1">
    <citation type="journal article" date="2005" name="Nature">
        <title>Initial sequence of the chimpanzee genome and comparison with the human genome.</title>
        <authorList>
            <consortium name="Chimpanzee sequencing and analysis consortium"/>
        </authorList>
    </citation>
    <scope>NUCLEOTIDE SEQUENCE [LARGE SCALE GENOMIC DNA]</scope>
</reference>
<reference key="2">
    <citation type="journal article" date="2005" name="Genetics">
        <title>Comparative genomics and diversifying selection of the clustered vertebrate protocadherin genes.</title>
        <authorList>
            <person name="Wu Q."/>
        </authorList>
    </citation>
    <scope>IDENTIFICATION</scope>
</reference>
<protein>
    <recommendedName>
        <fullName>Protocadherin beta-7</fullName>
        <shortName>PCDH-beta-7</shortName>
    </recommendedName>
</protein>
<name>PCDB7_PANTR</name>